<sequence length="426" mass="46924">MLDKDLILNDNTYELSQISRHKTHVVEVGKVKIGGNNPVVVQSMALGVHIDADNIKSSAKHYAKEITELARTGSELVRIALNSEEVARAIPYIVEEINKEGFDGKILVGCGQYELDKLVQDYPDNIKMLGKIRINPGNIGFGDKRDEKFERVIEYAIMHDLPVRIGVNWGSLDKYLLQKLMDENSSLSNSRPSDVILRKALVMSALDSAKKAEGIGLNSNKIIISCKVSKVQDLILVYMALAKSSNYALHLGLTEAGMGNKGVVNTAAGLTYLLQNGIGDTIRASLTQRPGESRTNEVVVCQEILQSIGLRYFNPQVNSCPGCGRTSSDRFRILTEEVNGYIKTHIPIWKKKNPGVEHMSIAVMGCIVNGPGESKHANLGISLPGYGEKPVSAVYKDGKYFKTLQGDNVSEEFKAIIDNYVKEHYT</sequence>
<feature type="chain" id="PRO_1000123464" description="4-hydroxy-3-methylbut-2-en-1-yl diphosphate synthase (flavodoxin)">
    <location>
        <begin position="1"/>
        <end position="426"/>
    </location>
</feature>
<feature type="binding site" evidence="1">
    <location>
        <position position="320"/>
    </location>
    <ligand>
        <name>[4Fe-4S] cluster</name>
        <dbReference type="ChEBI" id="CHEBI:49883"/>
    </ligand>
</feature>
<feature type="binding site" evidence="1">
    <location>
        <position position="323"/>
    </location>
    <ligand>
        <name>[4Fe-4S] cluster</name>
        <dbReference type="ChEBI" id="CHEBI:49883"/>
    </ligand>
</feature>
<feature type="binding site" evidence="1">
    <location>
        <position position="366"/>
    </location>
    <ligand>
        <name>[4Fe-4S] cluster</name>
        <dbReference type="ChEBI" id="CHEBI:49883"/>
    </ligand>
</feature>
<feature type="binding site" evidence="1">
    <location>
        <position position="373"/>
    </location>
    <ligand>
        <name>[4Fe-4S] cluster</name>
        <dbReference type="ChEBI" id="CHEBI:49883"/>
    </ligand>
</feature>
<gene>
    <name evidence="1" type="primary">ispG</name>
    <name type="ordered locus">WRi_001360</name>
</gene>
<organism>
    <name type="scientific">Wolbachia sp. subsp. Drosophila simulans (strain wRi)</name>
    <dbReference type="NCBI Taxonomy" id="66084"/>
    <lineage>
        <taxon>Bacteria</taxon>
        <taxon>Pseudomonadati</taxon>
        <taxon>Pseudomonadota</taxon>
        <taxon>Alphaproteobacteria</taxon>
        <taxon>Rickettsiales</taxon>
        <taxon>Anaplasmataceae</taxon>
        <taxon>Wolbachieae</taxon>
        <taxon>Wolbachia</taxon>
    </lineage>
</organism>
<protein>
    <recommendedName>
        <fullName evidence="1">4-hydroxy-3-methylbut-2-en-1-yl diphosphate synthase (flavodoxin)</fullName>
        <ecNumber evidence="1">1.17.7.3</ecNumber>
    </recommendedName>
    <alternativeName>
        <fullName evidence="1">1-hydroxy-2-methyl-2-(E)-butenyl 4-diphosphate synthase</fullName>
    </alternativeName>
</protein>
<keyword id="KW-0004">4Fe-4S</keyword>
<keyword id="KW-0408">Iron</keyword>
<keyword id="KW-0411">Iron-sulfur</keyword>
<keyword id="KW-0414">Isoprene biosynthesis</keyword>
<keyword id="KW-0479">Metal-binding</keyword>
<keyword id="KW-0560">Oxidoreductase</keyword>
<name>ISPG_WOLWR</name>
<reference key="1">
    <citation type="journal article" date="2009" name="Proc. Natl. Acad. Sci. U.S.A.">
        <title>The mosaic genome structure of the Wolbachia wRi strain infecting Drosophila simulans.</title>
        <authorList>
            <person name="Klasson L."/>
            <person name="Westberg J."/>
            <person name="Sapountzis P."/>
            <person name="Naeslund K."/>
            <person name="Lutnaes Y."/>
            <person name="Darby A.C."/>
            <person name="Veneti Z."/>
            <person name="Chen L."/>
            <person name="Braig H.R."/>
            <person name="Garrett R."/>
            <person name="Bourtzis K."/>
            <person name="Andersson S.G."/>
        </authorList>
    </citation>
    <scope>NUCLEOTIDE SEQUENCE [LARGE SCALE GENOMIC DNA]</scope>
    <source>
        <strain>wRi</strain>
    </source>
</reference>
<accession>C0R5E5</accession>
<proteinExistence type="inferred from homology"/>
<comment type="function">
    <text evidence="1">Converts 2C-methyl-D-erythritol 2,4-cyclodiphosphate (ME-2,4cPP) into 1-hydroxy-2-methyl-2-(E)-butenyl 4-diphosphate.</text>
</comment>
<comment type="catalytic activity">
    <reaction evidence="1">
        <text>(2E)-4-hydroxy-3-methylbut-2-enyl diphosphate + oxidized [flavodoxin] + H2O + 2 H(+) = 2-C-methyl-D-erythritol 2,4-cyclic diphosphate + reduced [flavodoxin]</text>
        <dbReference type="Rhea" id="RHEA:43604"/>
        <dbReference type="Rhea" id="RHEA-COMP:10622"/>
        <dbReference type="Rhea" id="RHEA-COMP:10623"/>
        <dbReference type="ChEBI" id="CHEBI:15377"/>
        <dbReference type="ChEBI" id="CHEBI:15378"/>
        <dbReference type="ChEBI" id="CHEBI:57618"/>
        <dbReference type="ChEBI" id="CHEBI:58210"/>
        <dbReference type="ChEBI" id="CHEBI:58483"/>
        <dbReference type="ChEBI" id="CHEBI:128753"/>
        <dbReference type="EC" id="1.17.7.3"/>
    </reaction>
</comment>
<comment type="cofactor">
    <cofactor evidence="1">
        <name>[4Fe-4S] cluster</name>
        <dbReference type="ChEBI" id="CHEBI:49883"/>
    </cofactor>
    <text evidence="1">Binds 1 [4Fe-4S] cluster.</text>
</comment>
<comment type="pathway">
    <text evidence="1">Isoprenoid biosynthesis; isopentenyl diphosphate biosynthesis via DXP pathway; isopentenyl diphosphate from 1-deoxy-D-xylulose 5-phosphate: step 5/6.</text>
</comment>
<comment type="similarity">
    <text evidence="1">Belongs to the IspG family.</text>
</comment>
<evidence type="ECO:0000255" key="1">
    <source>
        <dbReference type="HAMAP-Rule" id="MF_00159"/>
    </source>
</evidence>
<dbReference type="EC" id="1.17.7.3" evidence="1"/>
<dbReference type="EMBL" id="CP001391">
    <property type="protein sequence ID" value="ACN94987.1"/>
    <property type="molecule type" value="Genomic_DNA"/>
</dbReference>
<dbReference type="RefSeq" id="WP_006280490.1">
    <property type="nucleotide sequence ID" value="NZ_MKIF01000120.1"/>
</dbReference>
<dbReference type="SMR" id="C0R5E5"/>
<dbReference type="STRING" id="66084.WRi_001360"/>
<dbReference type="KEGG" id="wri:WRi_001360"/>
<dbReference type="HOGENOM" id="CLU_042258_1_0_5"/>
<dbReference type="UniPathway" id="UPA00056">
    <property type="reaction ID" value="UER00096"/>
</dbReference>
<dbReference type="Proteomes" id="UP000001293">
    <property type="component" value="Chromosome"/>
</dbReference>
<dbReference type="GO" id="GO:0051539">
    <property type="term" value="F:4 iron, 4 sulfur cluster binding"/>
    <property type="evidence" value="ECO:0007669"/>
    <property type="project" value="UniProtKB-UniRule"/>
</dbReference>
<dbReference type="GO" id="GO:0046429">
    <property type="term" value="F:4-hydroxy-3-methylbut-2-en-1-yl diphosphate synthase activity (ferredoxin)"/>
    <property type="evidence" value="ECO:0007669"/>
    <property type="project" value="UniProtKB-UniRule"/>
</dbReference>
<dbReference type="GO" id="GO:0141197">
    <property type="term" value="F:4-hydroxy-3-methylbut-2-enyl-diphosphate synthase activity (flavodoxin)"/>
    <property type="evidence" value="ECO:0007669"/>
    <property type="project" value="UniProtKB-EC"/>
</dbReference>
<dbReference type="GO" id="GO:0005506">
    <property type="term" value="F:iron ion binding"/>
    <property type="evidence" value="ECO:0007669"/>
    <property type="project" value="InterPro"/>
</dbReference>
<dbReference type="GO" id="GO:0019288">
    <property type="term" value="P:isopentenyl diphosphate biosynthetic process, methylerythritol 4-phosphate pathway"/>
    <property type="evidence" value="ECO:0007669"/>
    <property type="project" value="UniProtKB-UniRule"/>
</dbReference>
<dbReference type="GO" id="GO:0016114">
    <property type="term" value="P:terpenoid biosynthetic process"/>
    <property type="evidence" value="ECO:0007669"/>
    <property type="project" value="InterPro"/>
</dbReference>
<dbReference type="FunFam" id="3.30.413.10:FF:000012">
    <property type="entry name" value="4-hydroxy-3-methylbut-2-en-1-yl diphosphate synthase (flavodoxin)"/>
    <property type="match status" value="1"/>
</dbReference>
<dbReference type="Gene3D" id="3.20.20.20">
    <property type="entry name" value="Dihydropteroate synthase-like"/>
    <property type="match status" value="1"/>
</dbReference>
<dbReference type="Gene3D" id="3.30.413.10">
    <property type="entry name" value="Sulfite Reductase Hemoprotein, domain 1"/>
    <property type="match status" value="1"/>
</dbReference>
<dbReference type="HAMAP" id="MF_00159">
    <property type="entry name" value="IspG"/>
    <property type="match status" value="1"/>
</dbReference>
<dbReference type="InterPro" id="IPR011005">
    <property type="entry name" value="Dihydropteroate_synth-like_sf"/>
</dbReference>
<dbReference type="InterPro" id="IPR016425">
    <property type="entry name" value="IspG_bac"/>
</dbReference>
<dbReference type="InterPro" id="IPR004588">
    <property type="entry name" value="IspG_bac-typ"/>
</dbReference>
<dbReference type="InterPro" id="IPR045854">
    <property type="entry name" value="NO2/SO3_Rdtase_4Fe4S_sf"/>
</dbReference>
<dbReference type="NCBIfam" id="TIGR00612">
    <property type="entry name" value="ispG_gcpE"/>
    <property type="match status" value="1"/>
</dbReference>
<dbReference type="NCBIfam" id="NF001540">
    <property type="entry name" value="PRK00366.1"/>
    <property type="match status" value="1"/>
</dbReference>
<dbReference type="PANTHER" id="PTHR30454">
    <property type="entry name" value="4-HYDROXY-3-METHYLBUT-2-EN-1-YL DIPHOSPHATE SYNTHASE"/>
    <property type="match status" value="1"/>
</dbReference>
<dbReference type="PANTHER" id="PTHR30454:SF0">
    <property type="entry name" value="4-HYDROXY-3-METHYLBUT-2-EN-1-YL DIPHOSPHATE SYNTHASE (FERREDOXIN), CHLOROPLASTIC"/>
    <property type="match status" value="1"/>
</dbReference>
<dbReference type="Pfam" id="PF04551">
    <property type="entry name" value="GcpE"/>
    <property type="match status" value="1"/>
</dbReference>
<dbReference type="PIRSF" id="PIRSF004640">
    <property type="entry name" value="IspG"/>
    <property type="match status" value="1"/>
</dbReference>